<feature type="chain" id="PRO_1000148910" description="Imidazole glycerol phosphate synthase subunit HisF">
    <location>
        <begin position="1"/>
        <end position="260"/>
    </location>
</feature>
<feature type="active site" evidence="1">
    <location>
        <position position="11"/>
    </location>
</feature>
<feature type="active site" evidence="1">
    <location>
        <position position="130"/>
    </location>
</feature>
<protein>
    <recommendedName>
        <fullName evidence="1">Imidazole glycerol phosphate synthase subunit HisF</fullName>
        <ecNumber evidence="1">4.3.2.10</ecNumber>
    </recommendedName>
    <alternativeName>
        <fullName evidence="1">IGP synthase cyclase subunit</fullName>
    </alternativeName>
    <alternativeName>
        <fullName evidence="1">IGP synthase subunit HisF</fullName>
    </alternativeName>
    <alternativeName>
        <fullName evidence="1">ImGP synthase subunit HisF</fullName>
        <shortName evidence="1">IGPS subunit HisF</shortName>
    </alternativeName>
</protein>
<comment type="function">
    <text evidence="1">IGPS catalyzes the conversion of PRFAR and glutamine to IGP, AICAR and glutamate. The HisF subunit catalyzes the cyclization activity that produces IGP and AICAR from PRFAR using the ammonia provided by the HisH subunit.</text>
</comment>
<comment type="catalytic activity">
    <reaction evidence="1">
        <text>5-[(5-phospho-1-deoxy-D-ribulos-1-ylimino)methylamino]-1-(5-phospho-beta-D-ribosyl)imidazole-4-carboxamide + L-glutamine = D-erythro-1-(imidazol-4-yl)glycerol 3-phosphate + 5-amino-1-(5-phospho-beta-D-ribosyl)imidazole-4-carboxamide + L-glutamate + H(+)</text>
        <dbReference type="Rhea" id="RHEA:24793"/>
        <dbReference type="ChEBI" id="CHEBI:15378"/>
        <dbReference type="ChEBI" id="CHEBI:29985"/>
        <dbReference type="ChEBI" id="CHEBI:58278"/>
        <dbReference type="ChEBI" id="CHEBI:58359"/>
        <dbReference type="ChEBI" id="CHEBI:58475"/>
        <dbReference type="ChEBI" id="CHEBI:58525"/>
        <dbReference type="EC" id="4.3.2.10"/>
    </reaction>
</comment>
<comment type="pathway">
    <text evidence="1">Amino-acid biosynthesis; L-histidine biosynthesis; L-histidine from 5-phospho-alpha-D-ribose 1-diphosphate: step 5/9.</text>
</comment>
<comment type="subunit">
    <text evidence="1">Heterodimer of HisH and HisF.</text>
</comment>
<comment type="subcellular location">
    <subcellularLocation>
        <location evidence="1">Cytoplasm</location>
    </subcellularLocation>
</comment>
<comment type="similarity">
    <text evidence="1">Belongs to the HisA/HisF family.</text>
</comment>
<proteinExistence type="inferred from homology"/>
<gene>
    <name evidence="1" type="primary">hisF</name>
    <name type="ordered locus">CCNA_03853</name>
</gene>
<dbReference type="EC" id="4.3.2.10" evidence="1"/>
<dbReference type="EMBL" id="CP001340">
    <property type="protein sequence ID" value="ACL97318.1"/>
    <property type="molecule type" value="Genomic_DNA"/>
</dbReference>
<dbReference type="RefSeq" id="WP_010921564.1">
    <property type="nucleotide sequence ID" value="NC_011916.1"/>
</dbReference>
<dbReference type="RefSeq" id="YP_002519226.1">
    <property type="nucleotide sequence ID" value="NC_011916.1"/>
</dbReference>
<dbReference type="SMR" id="B8GW15"/>
<dbReference type="GeneID" id="7332701"/>
<dbReference type="KEGG" id="ccs:CCNA_03853"/>
<dbReference type="PATRIC" id="fig|565050.3.peg.3758"/>
<dbReference type="HOGENOM" id="CLU_048577_4_0_5"/>
<dbReference type="OrthoDB" id="9781903at2"/>
<dbReference type="PhylomeDB" id="B8GW15"/>
<dbReference type="UniPathway" id="UPA00031">
    <property type="reaction ID" value="UER00010"/>
</dbReference>
<dbReference type="Proteomes" id="UP000001364">
    <property type="component" value="Chromosome"/>
</dbReference>
<dbReference type="GO" id="GO:0005737">
    <property type="term" value="C:cytoplasm"/>
    <property type="evidence" value="ECO:0007669"/>
    <property type="project" value="UniProtKB-SubCell"/>
</dbReference>
<dbReference type="GO" id="GO:0000107">
    <property type="term" value="F:imidazoleglycerol-phosphate synthase activity"/>
    <property type="evidence" value="ECO:0007669"/>
    <property type="project" value="UniProtKB-UniRule"/>
</dbReference>
<dbReference type="GO" id="GO:0016829">
    <property type="term" value="F:lyase activity"/>
    <property type="evidence" value="ECO:0007669"/>
    <property type="project" value="UniProtKB-KW"/>
</dbReference>
<dbReference type="GO" id="GO:0000105">
    <property type="term" value="P:L-histidine biosynthetic process"/>
    <property type="evidence" value="ECO:0007669"/>
    <property type="project" value="UniProtKB-UniRule"/>
</dbReference>
<dbReference type="CDD" id="cd04731">
    <property type="entry name" value="HisF"/>
    <property type="match status" value="1"/>
</dbReference>
<dbReference type="FunFam" id="3.20.20.70:FF:000006">
    <property type="entry name" value="Imidazole glycerol phosphate synthase subunit HisF"/>
    <property type="match status" value="1"/>
</dbReference>
<dbReference type="Gene3D" id="3.20.20.70">
    <property type="entry name" value="Aldolase class I"/>
    <property type="match status" value="1"/>
</dbReference>
<dbReference type="HAMAP" id="MF_01013">
    <property type="entry name" value="HisF"/>
    <property type="match status" value="1"/>
</dbReference>
<dbReference type="InterPro" id="IPR013785">
    <property type="entry name" value="Aldolase_TIM"/>
</dbReference>
<dbReference type="InterPro" id="IPR006062">
    <property type="entry name" value="His_biosynth"/>
</dbReference>
<dbReference type="InterPro" id="IPR004651">
    <property type="entry name" value="HisF"/>
</dbReference>
<dbReference type="InterPro" id="IPR050064">
    <property type="entry name" value="IGPS_HisA/HisF"/>
</dbReference>
<dbReference type="InterPro" id="IPR011060">
    <property type="entry name" value="RibuloseP-bd_barrel"/>
</dbReference>
<dbReference type="NCBIfam" id="TIGR00735">
    <property type="entry name" value="hisF"/>
    <property type="match status" value="1"/>
</dbReference>
<dbReference type="PANTHER" id="PTHR21235:SF2">
    <property type="entry name" value="IMIDAZOLE GLYCEROL PHOSPHATE SYNTHASE HISHF"/>
    <property type="match status" value="1"/>
</dbReference>
<dbReference type="PANTHER" id="PTHR21235">
    <property type="entry name" value="IMIDAZOLE GLYCEROL PHOSPHATE SYNTHASE SUBUNIT HISF/H IGP SYNTHASE SUBUNIT HISF/H"/>
    <property type="match status" value="1"/>
</dbReference>
<dbReference type="Pfam" id="PF00977">
    <property type="entry name" value="His_biosynth"/>
    <property type="match status" value="1"/>
</dbReference>
<dbReference type="SUPFAM" id="SSF51366">
    <property type="entry name" value="Ribulose-phoshate binding barrel"/>
    <property type="match status" value="1"/>
</dbReference>
<name>HIS6_CAUVN</name>
<accession>B8GW15</accession>
<sequence>MLKTRIIPCLDVKDGRVVKGVNFVSLRDAGDPVEQARAYDAAGADELMFLDITASSEGRGLILDVISRTAEVCFMPVSVGGGVRQVSDMRRLLLAGADKVSVNTAAVENPDLIAGGADAFGSQCVVVAIDAKAREDGSGWNVWTYGGRKDTGIDVVEWAAKVVERGAGEILLTSMDRDGAKIGYDIPLLQAVTGAVNVPVIASGGAGKTEHLIEAAREGHAAAVLAASIFHFGEISIGEAKQAMADAGIPVRLDALKGAA</sequence>
<organism>
    <name type="scientific">Caulobacter vibrioides (strain NA1000 / CB15N)</name>
    <name type="common">Caulobacter crescentus</name>
    <dbReference type="NCBI Taxonomy" id="565050"/>
    <lineage>
        <taxon>Bacteria</taxon>
        <taxon>Pseudomonadati</taxon>
        <taxon>Pseudomonadota</taxon>
        <taxon>Alphaproteobacteria</taxon>
        <taxon>Caulobacterales</taxon>
        <taxon>Caulobacteraceae</taxon>
        <taxon>Caulobacter</taxon>
    </lineage>
</organism>
<reference key="1">
    <citation type="journal article" date="2010" name="J. Bacteriol.">
        <title>The genetic basis of laboratory adaptation in Caulobacter crescentus.</title>
        <authorList>
            <person name="Marks M.E."/>
            <person name="Castro-Rojas C.M."/>
            <person name="Teiling C."/>
            <person name="Du L."/>
            <person name="Kapatral V."/>
            <person name="Walunas T.L."/>
            <person name="Crosson S."/>
        </authorList>
    </citation>
    <scope>NUCLEOTIDE SEQUENCE [LARGE SCALE GENOMIC DNA]</scope>
    <source>
        <strain>NA1000 / CB15N</strain>
    </source>
</reference>
<keyword id="KW-0028">Amino-acid biosynthesis</keyword>
<keyword id="KW-0963">Cytoplasm</keyword>
<keyword id="KW-0368">Histidine biosynthesis</keyword>
<keyword id="KW-0456">Lyase</keyword>
<keyword id="KW-1185">Reference proteome</keyword>
<evidence type="ECO:0000255" key="1">
    <source>
        <dbReference type="HAMAP-Rule" id="MF_01013"/>
    </source>
</evidence>